<reference key="1">
    <citation type="journal article" date="2004" name="Proc. Natl. Acad. Sci. U.S.A.">
        <title>The louse-borne human pathogen Bartonella quintana is a genomic derivative of the zoonotic agent Bartonella henselae.</title>
        <authorList>
            <person name="Alsmark U.C.M."/>
            <person name="Frank A.C."/>
            <person name="Karlberg E.O."/>
            <person name="Legault B.-A."/>
            <person name="Ardell D.H."/>
            <person name="Canbaeck B."/>
            <person name="Eriksson A.-S."/>
            <person name="Naeslund A.K."/>
            <person name="Handley S.A."/>
            <person name="Huvet M."/>
            <person name="La Scola B."/>
            <person name="Holmberg M."/>
            <person name="Andersson S.G.E."/>
        </authorList>
    </citation>
    <scope>NUCLEOTIDE SEQUENCE [LARGE SCALE GENOMIC DNA]</scope>
    <source>
        <strain>ATCC 49882 / DSM 28221 / CCUG 30454 / Houston 1</strain>
    </source>
</reference>
<gene>
    <name evidence="1" type="primary">murG</name>
    <name type="ordered locus">BH11240</name>
</gene>
<protein>
    <recommendedName>
        <fullName evidence="1">UDP-N-acetylglucosamine--N-acetylmuramyl-(pentapeptide) pyrophosphoryl-undecaprenol N-acetylglucosamine transferase</fullName>
        <ecNumber evidence="1">2.4.1.227</ecNumber>
    </recommendedName>
    <alternativeName>
        <fullName evidence="1">Undecaprenyl-PP-MurNAc-pentapeptide-UDPGlcNAc GlcNAc transferase</fullName>
    </alternativeName>
</protein>
<dbReference type="EC" id="2.4.1.227" evidence="1"/>
<dbReference type="EMBL" id="BX897699">
    <property type="protein sequence ID" value="CAF27909.1"/>
    <property type="molecule type" value="Genomic_DNA"/>
</dbReference>
<dbReference type="RefSeq" id="WP_011180972.1">
    <property type="nucleotide sequence ID" value="NC_005956.1"/>
</dbReference>
<dbReference type="SMR" id="Q6G2Q5"/>
<dbReference type="CAZy" id="GT28">
    <property type="family name" value="Glycosyltransferase Family 28"/>
</dbReference>
<dbReference type="PaxDb" id="283166-BH11240"/>
<dbReference type="EnsemblBacteria" id="CAF27909">
    <property type="protein sequence ID" value="CAF27909"/>
    <property type="gene ID" value="BH11240"/>
</dbReference>
<dbReference type="GeneID" id="92985738"/>
<dbReference type="KEGG" id="bhe:BH11240"/>
<dbReference type="eggNOG" id="COG0707">
    <property type="taxonomic scope" value="Bacteria"/>
</dbReference>
<dbReference type="OrthoDB" id="9808936at2"/>
<dbReference type="UniPathway" id="UPA00219"/>
<dbReference type="Proteomes" id="UP000000421">
    <property type="component" value="Chromosome"/>
</dbReference>
<dbReference type="GO" id="GO:0005886">
    <property type="term" value="C:plasma membrane"/>
    <property type="evidence" value="ECO:0007669"/>
    <property type="project" value="UniProtKB-SubCell"/>
</dbReference>
<dbReference type="GO" id="GO:0051991">
    <property type="term" value="F:UDP-N-acetyl-D-glucosamine:N-acetylmuramoyl-L-alanyl-D-glutamyl-meso-2,6-diaminopimelyl-D-alanyl-D-alanine-diphosphoundecaprenol 4-beta-N-acetylglucosaminlytransferase activity"/>
    <property type="evidence" value="ECO:0007669"/>
    <property type="project" value="RHEA"/>
</dbReference>
<dbReference type="GO" id="GO:0050511">
    <property type="term" value="F:undecaprenyldiphospho-muramoylpentapeptide beta-N-acetylglucosaminyltransferase activity"/>
    <property type="evidence" value="ECO:0007669"/>
    <property type="project" value="UniProtKB-UniRule"/>
</dbReference>
<dbReference type="GO" id="GO:0005975">
    <property type="term" value="P:carbohydrate metabolic process"/>
    <property type="evidence" value="ECO:0007669"/>
    <property type="project" value="InterPro"/>
</dbReference>
<dbReference type="GO" id="GO:0051301">
    <property type="term" value="P:cell division"/>
    <property type="evidence" value="ECO:0007669"/>
    <property type="project" value="UniProtKB-KW"/>
</dbReference>
<dbReference type="GO" id="GO:0071555">
    <property type="term" value="P:cell wall organization"/>
    <property type="evidence" value="ECO:0007669"/>
    <property type="project" value="UniProtKB-KW"/>
</dbReference>
<dbReference type="GO" id="GO:0030259">
    <property type="term" value="P:lipid glycosylation"/>
    <property type="evidence" value="ECO:0007669"/>
    <property type="project" value="UniProtKB-UniRule"/>
</dbReference>
<dbReference type="GO" id="GO:0009252">
    <property type="term" value="P:peptidoglycan biosynthetic process"/>
    <property type="evidence" value="ECO:0007669"/>
    <property type="project" value="UniProtKB-UniRule"/>
</dbReference>
<dbReference type="GO" id="GO:0008360">
    <property type="term" value="P:regulation of cell shape"/>
    <property type="evidence" value="ECO:0007669"/>
    <property type="project" value="UniProtKB-KW"/>
</dbReference>
<dbReference type="CDD" id="cd03785">
    <property type="entry name" value="GT28_MurG"/>
    <property type="match status" value="1"/>
</dbReference>
<dbReference type="Gene3D" id="3.40.50.2000">
    <property type="entry name" value="Glycogen Phosphorylase B"/>
    <property type="match status" value="2"/>
</dbReference>
<dbReference type="HAMAP" id="MF_00033">
    <property type="entry name" value="MurG"/>
    <property type="match status" value="1"/>
</dbReference>
<dbReference type="InterPro" id="IPR006009">
    <property type="entry name" value="GlcNAc_MurG"/>
</dbReference>
<dbReference type="InterPro" id="IPR007235">
    <property type="entry name" value="Glyco_trans_28_C"/>
</dbReference>
<dbReference type="InterPro" id="IPR004276">
    <property type="entry name" value="GlycoTrans_28_N"/>
</dbReference>
<dbReference type="NCBIfam" id="TIGR01133">
    <property type="entry name" value="murG"/>
    <property type="match status" value="1"/>
</dbReference>
<dbReference type="PANTHER" id="PTHR21015:SF22">
    <property type="entry name" value="GLYCOSYLTRANSFERASE"/>
    <property type="match status" value="1"/>
</dbReference>
<dbReference type="PANTHER" id="PTHR21015">
    <property type="entry name" value="UDP-N-ACETYLGLUCOSAMINE--N-ACETYLMURAMYL-(PENTAPEPTIDE) PYROPHOSPHORYL-UNDECAPRENOL N-ACETYLGLUCOSAMINE TRANSFERASE 1"/>
    <property type="match status" value="1"/>
</dbReference>
<dbReference type="Pfam" id="PF04101">
    <property type="entry name" value="Glyco_tran_28_C"/>
    <property type="match status" value="1"/>
</dbReference>
<dbReference type="Pfam" id="PF03033">
    <property type="entry name" value="Glyco_transf_28"/>
    <property type="match status" value="1"/>
</dbReference>
<dbReference type="SUPFAM" id="SSF53756">
    <property type="entry name" value="UDP-Glycosyltransferase/glycogen phosphorylase"/>
    <property type="match status" value="1"/>
</dbReference>
<organism>
    <name type="scientific">Bartonella henselae (strain ATCC 49882 / DSM 28221 / CCUG 30454 / Houston 1)</name>
    <name type="common">Rochalimaea henselae</name>
    <dbReference type="NCBI Taxonomy" id="283166"/>
    <lineage>
        <taxon>Bacteria</taxon>
        <taxon>Pseudomonadati</taxon>
        <taxon>Pseudomonadota</taxon>
        <taxon>Alphaproteobacteria</taxon>
        <taxon>Hyphomicrobiales</taxon>
        <taxon>Bartonellaceae</taxon>
        <taxon>Bartonella</taxon>
    </lineage>
</organism>
<proteinExistence type="inferred from homology"/>
<comment type="function">
    <text evidence="1">Cell wall formation. Catalyzes the transfer of a GlcNAc subunit on undecaprenyl-pyrophosphoryl-MurNAc-pentapeptide (lipid intermediate I) to form undecaprenyl-pyrophosphoryl-MurNAc-(pentapeptide)GlcNAc (lipid intermediate II).</text>
</comment>
<comment type="catalytic activity">
    <reaction evidence="1">
        <text>di-trans,octa-cis-undecaprenyl diphospho-N-acetyl-alpha-D-muramoyl-L-alanyl-D-glutamyl-meso-2,6-diaminopimeloyl-D-alanyl-D-alanine + UDP-N-acetyl-alpha-D-glucosamine = di-trans,octa-cis-undecaprenyl diphospho-[N-acetyl-alpha-D-glucosaminyl-(1-&gt;4)]-N-acetyl-alpha-D-muramoyl-L-alanyl-D-glutamyl-meso-2,6-diaminopimeloyl-D-alanyl-D-alanine + UDP + H(+)</text>
        <dbReference type="Rhea" id="RHEA:31227"/>
        <dbReference type="ChEBI" id="CHEBI:15378"/>
        <dbReference type="ChEBI" id="CHEBI:57705"/>
        <dbReference type="ChEBI" id="CHEBI:58223"/>
        <dbReference type="ChEBI" id="CHEBI:61387"/>
        <dbReference type="ChEBI" id="CHEBI:61388"/>
        <dbReference type="EC" id="2.4.1.227"/>
    </reaction>
</comment>
<comment type="pathway">
    <text evidence="1">Cell wall biogenesis; peptidoglycan biosynthesis.</text>
</comment>
<comment type="subcellular location">
    <subcellularLocation>
        <location evidence="1">Cell inner membrane</location>
        <topology evidence="1">Peripheral membrane protein</topology>
        <orientation evidence="1">Cytoplasmic side</orientation>
    </subcellularLocation>
</comment>
<comment type="similarity">
    <text evidence="1">Belongs to the glycosyltransferase 28 family. MurG subfamily.</text>
</comment>
<accession>Q6G2Q5</accession>
<feature type="chain" id="PRO_0000225031" description="UDP-N-acetylglucosamine--N-acetylmuramyl-(pentapeptide) pyrophosphoryl-undecaprenol N-acetylglucosamine transferase">
    <location>
        <begin position="1"/>
        <end position="378"/>
    </location>
</feature>
<feature type="binding site" evidence="1">
    <location>
        <begin position="14"/>
        <end position="16"/>
    </location>
    <ligand>
        <name>UDP-N-acetyl-alpha-D-glucosamine</name>
        <dbReference type="ChEBI" id="CHEBI:57705"/>
    </ligand>
</feature>
<feature type="binding site" evidence="1">
    <location>
        <position position="125"/>
    </location>
    <ligand>
        <name>UDP-N-acetyl-alpha-D-glucosamine</name>
        <dbReference type="ChEBI" id="CHEBI:57705"/>
    </ligand>
</feature>
<feature type="binding site" evidence="1">
    <location>
        <position position="165"/>
    </location>
    <ligand>
        <name>UDP-N-acetyl-alpha-D-glucosamine</name>
        <dbReference type="ChEBI" id="CHEBI:57705"/>
    </ligand>
</feature>
<feature type="binding site" evidence="1">
    <location>
        <position position="193"/>
    </location>
    <ligand>
        <name>UDP-N-acetyl-alpha-D-glucosamine</name>
        <dbReference type="ChEBI" id="CHEBI:57705"/>
    </ligand>
</feature>
<feature type="binding site" evidence="1">
    <location>
        <position position="293"/>
    </location>
    <ligand>
        <name>UDP-N-acetyl-alpha-D-glucosamine</name>
        <dbReference type="ChEBI" id="CHEBI:57705"/>
    </ligand>
</feature>
<keyword id="KW-0131">Cell cycle</keyword>
<keyword id="KW-0132">Cell division</keyword>
<keyword id="KW-0997">Cell inner membrane</keyword>
<keyword id="KW-1003">Cell membrane</keyword>
<keyword id="KW-0133">Cell shape</keyword>
<keyword id="KW-0961">Cell wall biogenesis/degradation</keyword>
<keyword id="KW-0328">Glycosyltransferase</keyword>
<keyword id="KW-0472">Membrane</keyword>
<keyword id="KW-0573">Peptidoglycan synthesis</keyword>
<keyword id="KW-0808">Transferase</keyword>
<name>MURG_BARHE</name>
<evidence type="ECO:0000255" key="1">
    <source>
        <dbReference type="HAMAP-Rule" id="MF_00033"/>
    </source>
</evidence>
<sequence>MTDKKVIVLAAGGTGGHLFPAEAVAVELRQRGYDVHLVTDERAQRFVRCFDEEHIHIISSATFTRRHPFSLIKTFWMLLKGMGQSLALFYKLCPVLVGGFGGYPTFPPLIVAAFMRRVTFIHEQNAVMGRANRVLAVFVSAIAGGLLSQNNRYAHKTVLTGNPVRDVVLNAAEIPYYPSEGEKPFHFLIFGGSQGASFFSRIVPEAIALLDDNIRQRLRIVQQVRGDTEELIKIYRQMDVQAEVAPFFDDMAERMARSQFILSRAGASSVCEIAVIGRPALLIPYPHALDHDQAANAALLARVGGAQIISEKDLNAQRLASLLTEAFCAPHLLEKQALAAKKVGQPYATRRLADMAEALIVGRSLSDVKEEFFDENAA</sequence>